<proteinExistence type="inferred from homology"/>
<accession>Q2LCP7</accession>
<reference key="1">
    <citation type="journal article" date="2008" name="Mol. Biol. Evol.">
        <title>Mitochondrial genome evolution in the social amoebae.</title>
        <authorList>
            <person name="Heidel A.J."/>
            <person name="Gloeckner G."/>
        </authorList>
    </citation>
    <scope>NUCLEOTIDE SEQUENCE [LARGE SCALE GENOMIC DNA]</scope>
</reference>
<gene>
    <name type="primary">nad4</name>
</gene>
<comment type="function">
    <text evidence="1">Core subunit of the mitochondrial membrane respiratory chain NADH dehydrogenase (Complex I) that is believed to belong to the minimal assembly required for catalysis. Complex I functions in the transfer of electrons from NADH to the respiratory chain. The immediate electron acceptor for the enzyme is believed to be ubiquinone (By similarity).</text>
</comment>
<comment type="catalytic activity">
    <reaction>
        <text>a ubiquinone + NADH + 5 H(+)(in) = a ubiquinol + NAD(+) + 4 H(+)(out)</text>
        <dbReference type="Rhea" id="RHEA:29091"/>
        <dbReference type="Rhea" id="RHEA-COMP:9565"/>
        <dbReference type="Rhea" id="RHEA-COMP:9566"/>
        <dbReference type="ChEBI" id="CHEBI:15378"/>
        <dbReference type="ChEBI" id="CHEBI:16389"/>
        <dbReference type="ChEBI" id="CHEBI:17976"/>
        <dbReference type="ChEBI" id="CHEBI:57540"/>
        <dbReference type="ChEBI" id="CHEBI:57945"/>
        <dbReference type="EC" id="7.1.1.2"/>
    </reaction>
</comment>
<comment type="subcellular location">
    <subcellularLocation>
        <location evidence="1">Mitochondrion membrane</location>
        <topology evidence="1">Multi-pass membrane protein</topology>
    </subcellularLocation>
</comment>
<comment type="similarity">
    <text evidence="3">Belongs to the complex I subunit 4 family.</text>
</comment>
<protein>
    <recommendedName>
        <fullName>NADH-ubiquinone oxidoreductase chain 4</fullName>
        <ecNumber>7.1.1.2</ecNumber>
    </recommendedName>
    <alternativeName>
        <fullName>NADH dehydrogenase subunit 4</fullName>
    </alternativeName>
</protein>
<evidence type="ECO:0000250" key="1"/>
<evidence type="ECO:0000255" key="2"/>
<evidence type="ECO:0000305" key="3"/>
<organism>
    <name type="scientific">Dictyostelium citrinum</name>
    <name type="common">Slime mold</name>
    <dbReference type="NCBI Taxonomy" id="361072"/>
    <lineage>
        <taxon>Eukaryota</taxon>
        <taxon>Amoebozoa</taxon>
        <taxon>Evosea</taxon>
        <taxon>Eumycetozoa</taxon>
        <taxon>Dictyostelia</taxon>
        <taxon>Dictyosteliales</taxon>
        <taxon>Dictyosteliaceae</taxon>
        <taxon>Dictyostelium</taxon>
    </lineage>
</organism>
<sequence length="414" mass="46295">MLLITEILIINFFAATDLVQLYIVYEASLIPMVIMIGVWGSRTEKKIAAFQILIYTLIGSIFMLMSIGLLYSTLGTTDYILIREYIEVLPENVRKIIFIGFFIGFAVKIPIAPLHLWLLRAHVEAPTAGSVLLAGILLKLGGYGYIRYNIGLFPDLCEYYFPIIGGICLISILYTGIATLTQLDVKRIVAYSSISHMNVIVLGLFSGVLQGLEGGIILMIGHGIVSGGLFLCIGVIYDRCKTRILYAYNNLVHMMPIMAILFFLLVLGNIAFPITSNFVGELLIFIGLIKKNIIIAFFSALSMIITAIYSFWLYNRIFFVNEIITREANEGIQMEVNKMTIKEGGINKKVTEGEIIGELEYPQYIKKESMKYSDVNIFEFVSIGLMVILMLIVGMKPSLVEGYIAINCLELISK</sequence>
<dbReference type="EC" id="7.1.1.2"/>
<dbReference type="EMBL" id="DQ336395">
    <property type="protein sequence ID" value="ABC60396.1"/>
    <property type="molecule type" value="Genomic_DNA"/>
</dbReference>
<dbReference type="RefSeq" id="YP_492645.2">
    <property type="nucleotide sequence ID" value="NC_007787.2"/>
</dbReference>
<dbReference type="SMR" id="Q2LCP7"/>
<dbReference type="GeneID" id="3912633"/>
<dbReference type="GO" id="GO:0031966">
    <property type="term" value="C:mitochondrial membrane"/>
    <property type="evidence" value="ECO:0007669"/>
    <property type="project" value="UniProtKB-SubCell"/>
</dbReference>
<dbReference type="GO" id="GO:0008137">
    <property type="term" value="F:NADH dehydrogenase (ubiquinone) activity"/>
    <property type="evidence" value="ECO:0007669"/>
    <property type="project" value="UniProtKB-EC"/>
</dbReference>
<dbReference type="GO" id="GO:0048039">
    <property type="term" value="F:ubiquinone binding"/>
    <property type="evidence" value="ECO:0007669"/>
    <property type="project" value="TreeGrafter"/>
</dbReference>
<dbReference type="GO" id="GO:0042773">
    <property type="term" value="P:ATP synthesis coupled electron transport"/>
    <property type="evidence" value="ECO:0007669"/>
    <property type="project" value="InterPro"/>
</dbReference>
<dbReference type="GO" id="GO:0015990">
    <property type="term" value="P:electron transport coupled proton transport"/>
    <property type="evidence" value="ECO:0007669"/>
    <property type="project" value="TreeGrafter"/>
</dbReference>
<dbReference type="InterPro" id="IPR010227">
    <property type="entry name" value="NADH_Q_OxRdtase_chainM/4"/>
</dbReference>
<dbReference type="InterPro" id="IPR003918">
    <property type="entry name" value="NADH_UbQ_OxRdtase"/>
</dbReference>
<dbReference type="InterPro" id="IPR001750">
    <property type="entry name" value="ND/Mrp_TM"/>
</dbReference>
<dbReference type="NCBIfam" id="TIGR01972">
    <property type="entry name" value="NDH_I_M"/>
    <property type="match status" value="1"/>
</dbReference>
<dbReference type="PANTHER" id="PTHR43507">
    <property type="entry name" value="NADH-UBIQUINONE OXIDOREDUCTASE CHAIN 4"/>
    <property type="match status" value="1"/>
</dbReference>
<dbReference type="PANTHER" id="PTHR43507:SF1">
    <property type="entry name" value="NADH-UBIQUINONE OXIDOREDUCTASE CHAIN 4"/>
    <property type="match status" value="1"/>
</dbReference>
<dbReference type="Pfam" id="PF00361">
    <property type="entry name" value="Proton_antipo_M"/>
    <property type="match status" value="1"/>
</dbReference>
<dbReference type="PRINTS" id="PR01437">
    <property type="entry name" value="NUOXDRDTASE4"/>
</dbReference>
<name>NU4M_DICCI</name>
<feature type="chain" id="PRO_0000312393" description="NADH-ubiquinone oxidoreductase chain 4">
    <location>
        <begin position="1"/>
        <end position="414"/>
    </location>
</feature>
<feature type="transmembrane region" description="Helical" evidence="2">
    <location>
        <begin position="18"/>
        <end position="38"/>
    </location>
</feature>
<feature type="transmembrane region" description="Helical" evidence="2">
    <location>
        <begin position="47"/>
        <end position="67"/>
    </location>
</feature>
<feature type="transmembrane region" description="Helical" evidence="2">
    <location>
        <begin position="96"/>
        <end position="116"/>
    </location>
</feature>
<feature type="transmembrane region" description="Helical" evidence="2">
    <location>
        <begin position="126"/>
        <end position="146"/>
    </location>
</feature>
<feature type="transmembrane region" description="Helical" evidence="2">
    <location>
        <begin position="160"/>
        <end position="180"/>
    </location>
</feature>
<feature type="transmembrane region" description="Helical" evidence="2">
    <location>
        <begin position="188"/>
        <end position="208"/>
    </location>
</feature>
<feature type="transmembrane region" description="Helical" evidence="2">
    <location>
        <begin position="216"/>
        <end position="236"/>
    </location>
</feature>
<feature type="transmembrane region" description="Helical" evidence="2">
    <location>
        <begin position="254"/>
        <end position="274"/>
    </location>
</feature>
<feature type="transmembrane region" description="Helical" evidence="2">
    <location>
        <begin position="293"/>
        <end position="313"/>
    </location>
</feature>
<feature type="transmembrane region" description="Helical" evidence="2">
    <location>
        <begin position="375"/>
        <end position="395"/>
    </location>
</feature>
<keyword id="KW-0249">Electron transport</keyword>
<keyword id="KW-0472">Membrane</keyword>
<keyword id="KW-0496">Mitochondrion</keyword>
<keyword id="KW-0520">NAD</keyword>
<keyword id="KW-0679">Respiratory chain</keyword>
<keyword id="KW-1278">Translocase</keyword>
<keyword id="KW-0812">Transmembrane</keyword>
<keyword id="KW-1133">Transmembrane helix</keyword>
<keyword id="KW-0813">Transport</keyword>
<keyword id="KW-0830">Ubiquinone</keyword>
<geneLocation type="mitochondrion"/>